<gene>
    <name type="primary">rpl15</name>
</gene>
<evidence type="ECO:0000250" key="1"/>
<evidence type="ECO:0000250" key="2">
    <source>
        <dbReference type="UniProtKB" id="P61313"/>
    </source>
</evidence>
<evidence type="ECO:0000305" key="3"/>
<comment type="function">
    <text evidence="2">Component of the large ribosomal subunit. The ribosome is a large ribonucleoprotein complex responsible for the synthesis of proteins in the cell.</text>
</comment>
<comment type="subunit">
    <text evidence="2">Component of the large ribosomal subunit.</text>
</comment>
<comment type="subcellular location">
    <subcellularLocation>
        <location evidence="2">Cytoplasm</location>
    </subcellularLocation>
</comment>
<comment type="similarity">
    <text evidence="3">Belongs to the eukaryotic ribosomal protein eL15 family.</text>
</comment>
<organism>
    <name type="scientific">Monopterus albus</name>
    <name type="common">Swamp eel</name>
    <dbReference type="NCBI Taxonomy" id="43700"/>
    <lineage>
        <taxon>Eukaryota</taxon>
        <taxon>Metazoa</taxon>
        <taxon>Chordata</taxon>
        <taxon>Craniata</taxon>
        <taxon>Vertebrata</taxon>
        <taxon>Euteleostomi</taxon>
        <taxon>Actinopterygii</taxon>
        <taxon>Neopterygii</taxon>
        <taxon>Teleostei</taxon>
        <taxon>Neoteleostei</taxon>
        <taxon>Acanthomorphata</taxon>
        <taxon>Anabantaria</taxon>
        <taxon>Synbranchiformes</taxon>
        <taxon>Synbranchidae</taxon>
        <taxon>Monopterus</taxon>
    </lineage>
</organism>
<keyword id="KW-0963">Cytoplasm</keyword>
<keyword id="KW-0687">Ribonucleoprotein</keyword>
<keyword id="KW-0689">Ribosomal protein</keyword>
<accession>Q7T3N2</accession>
<reference key="1">
    <citation type="submission" date="2003-03" db="EMBL/GenBank/DDBJ databases">
        <title>Evaluating the potential of ribosomal protein L15 as a novel marker for phylogenetic analysis: a comparative analysis of 15 teleost RPL15 cDNAs.</title>
        <authorList>
            <person name="Song P."/>
            <person name="Zhang J."/>
            <person name="Xiang Z."/>
        </authorList>
    </citation>
    <scope>NUCLEOTIDE SEQUENCE [MRNA]</scope>
    <source>
        <tissue>Liver</tissue>
    </source>
</reference>
<dbReference type="EMBL" id="AY249420">
    <property type="protein sequence ID" value="AAP35257.1"/>
    <property type="molecule type" value="mRNA"/>
</dbReference>
<dbReference type="RefSeq" id="XP_020462043.1">
    <property type="nucleotide sequence ID" value="XM_020606387.1"/>
</dbReference>
<dbReference type="SMR" id="Q7T3N2"/>
<dbReference type="STRING" id="43700.ENSMALP00000006638"/>
<dbReference type="Ensembl" id="ENSMALT00000006779.1">
    <property type="protein sequence ID" value="ENSMALP00000006638.1"/>
    <property type="gene ID" value="ENSMALG00000004718.1"/>
</dbReference>
<dbReference type="GeneID" id="109963675"/>
<dbReference type="OrthoDB" id="10255148at2759"/>
<dbReference type="Proteomes" id="UP000261600">
    <property type="component" value="Unplaced"/>
</dbReference>
<dbReference type="GO" id="GO:0022625">
    <property type="term" value="C:cytosolic large ribosomal subunit"/>
    <property type="evidence" value="ECO:0007669"/>
    <property type="project" value="TreeGrafter"/>
</dbReference>
<dbReference type="GO" id="GO:0003723">
    <property type="term" value="F:RNA binding"/>
    <property type="evidence" value="ECO:0007669"/>
    <property type="project" value="TreeGrafter"/>
</dbReference>
<dbReference type="GO" id="GO:0003735">
    <property type="term" value="F:structural constituent of ribosome"/>
    <property type="evidence" value="ECO:0007669"/>
    <property type="project" value="InterPro"/>
</dbReference>
<dbReference type="GO" id="GO:0002181">
    <property type="term" value="P:cytoplasmic translation"/>
    <property type="evidence" value="ECO:0007669"/>
    <property type="project" value="TreeGrafter"/>
</dbReference>
<dbReference type="FunFam" id="3.40.1120.10:FF:000001">
    <property type="entry name" value="Ribosomal protein L15"/>
    <property type="match status" value="1"/>
</dbReference>
<dbReference type="Gene3D" id="3.40.1120.10">
    <property type="entry name" value="Ribosomal protein l15e"/>
    <property type="match status" value="1"/>
</dbReference>
<dbReference type="InterPro" id="IPR024794">
    <property type="entry name" value="Rbsml_eL15_core_dom_sf"/>
</dbReference>
<dbReference type="InterPro" id="IPR000439">
    <property type="entry name" value="Ribosomal_eL15"/>
</dbReference>
<dbReference type="InterPro" id="IPR020925">
    <property type="entry name" value="Ribosomal_eL15_CS"/>
</dbReference>
<dbReference type="InterPro" id="IPR012678">
    <property type="entry name" value="Ribosomal_uL23/eL15/eS24_sf"/>
</dbReference>
<dbReference type="NCBIfam" id="NF003269">
    <property type="entry name" value="PRK04243.1"/>
    <property type="match status" value="1"/>
</dbReference>
<dbReference type="PANTHER" id="PTHR11847:SF4">
    <property type="entry name" value="LARGE RIBOSOMAL SUBUNIT PROTEIN EL15"/>
    <property type="match status" value="1"/>
</dbReference>
<dbReference type="PANTHER" id="PTHR11847">
    <property type="entry name" value="RIBOSOMAL PROTEIN L15"/>
    <property type="match status" value="1"/>
</dbReference>
<dbReference type="Pfam" id="PF00827">
    <property type="entry name" value="Ribosomal_L15e"/>
    <property type="match status" value="1"/>
</dbReference>
<dbReference type="SMART" id="SM01384">
    <property type="entry name" value="Ribosomal_L15e"/>
    <property type="match status" value="1"/>
</dbReference>
<dbReference type="SUPFAM" id="SSF54189">
    <property type="entry name" value="Ribosomal proteins S24e, L23 and L15e"/>
    <property type="match status" value="1"/>
</dbReference>
<dbReference type="PROSITE" id="PS01194">
    <property type="entry name" value="RIBOSOMAL_L15E"/>
    <property type="match status" value="1"/>
</dbReference>
<feature type="initiator methionine" description="Removed" evidence="1">
    <location>
        <position position="1"/>
    </location>
</feature>
<feature type="chain" id="PRO_0000127542" description="Large ribosomal subunit protein eL15">
    <location>
        <begin position="2"/>
        <end position="204"/>
    </location>
</feature>
<proteinExistence type="evidence at transcript level"/>
<sequence length="204" mass="24115">MGAYRYMQELWRKKQSDVMRFLLRVRCWQYRQLSNLHRAPRPTRPDKARRLGYKAKQGYVIYRVRVRRGGRKRPVPKGATYGKPVHHGVNQIKFARSLQSVAEERAGRHCGALRVLNSYWVGEDSTYKFFEVILIDPFHKAIRRNPDTQWITKAVHKHREMRGLTSAGKKSRGLGKGHKFHLTIGGSRRAAWKRRNTLQLHRYR</sequence>
<protein>
    <recommendedName>
        <fullName evidence="3">Large ribosomal subunit protein eL15</fullName>
    </recommendedName>
    <alternativeName>
        <fullName>60S ribosomal protein L15</fullName>
    </alternativeName>
</protein>
<name>RL15_MONAL</name>